<name>PAND_PYRIL</name>
<reference key="1">
    <citation type="submission" date="2006-12" db="EMBL/GenBank/DDBJ databases">
        <title>Complete sequence of Pyrobaculum islandicum DSM 4184.</title>
        <authorList>
            <person name="Copeland A."/>
            <person name="Lucas S."/>
            <person name="Lapidus A."/>
            <person name="Barry K."/>
            <person name="Detter J.C."/>
            <person name="Glavina del Rio T."/>
            <person name="Dalin E."/>
            <person name="Tice H."/>
            <person name="Pitluck S."/>
            <person name="Meincke L."/>
            <person name="Brettin T."/>
            <person name="Bruce D."/>
            <person name="Han C."/>
            <person name="Tapia R."/>
            <person name="Gilna P."/>
            <person name="Schmutz J."/>
            <person name="Larimer F."/>
            <person name="Land M."/>
            <person name="Hauser L."/>
            <person name="Kyrpides N."/>
            <person name="Mikhailova N."/>
            <person name="Cozen A.E."/>
            <person name="Fitz-Gibbon S.T."/>
            <person name="House C.H."/>
            <person name="Saltikov C."/>
            <person name="Lowe T."/>
            <person name="Richardson P."/>
        </authorList>
    </citation>
    <scope>NUCLEOTIDE SEQUENCE [LARGE SCALE GENOMIC DNA]</scope>
    <source>
        <strain>DSM 4184 / JCM 9189 / GEO3</strain>
    </source>
</reference>
<evidence type="ECO:0000255" key="1">
    <source>
        <dbReference type="HAMAP-Rule" id="MF_00446"/>
    </source>
</evidence>
<accession>A1RUA9</accession>
<keyword id="KW-0068">Autocatalytic cleavage</keyword>
<keyword id="KW-0963">Cytoplasm</keyword>
<keyword id="KW-0210">Decarboxylase</keyword>
<keyword id="KW-0456">Lyase</keyword>
<keyword id="KW-0566">Pantothenate biosynthesis</keyword>
<keyword id="KW-0670">Pyruvate</keyword>
<keyword id="KW-0704">Schiff base</keyword>
<keyword id="KW-0865">Zymogen</keyword>
<dbReference type="EC" id="4.1.1.11" evidence="1"/>
<dbReference type="EMBL" id="CP000504">
    <property type="protein sequence ID" value="ABL88541.1"/>
    <property type="molecule type" value="Genomic_DNA"/>
</dbReference>
<dbReference type="RefSeq" id="WP_011763116.1">
    <property type="nucleotide sequence ID" value="NC_008701.1"/>
</dbReference>
<dbReference type="SMR" id="A1RUA9"/>
<dbReference type="STRING" id="384616.Pisl_1381"/>
<dbReference type="GeneID" id="4617059"/>
<dbReference type="KEGG" id="pis:Pisl_1381"/>
<dbReference type="eggNOG" id="arCOG04813">
    <property type="taxonomic scope" value="Archaea"/>
</dbReference>
<dbReference type="HOGENOM" id="CLU_115305_2_1_2"/>
<dbReference type="OrthoDB" id="52900at2157"/>
<dbReference type="UniPathway" id="UPA00028">
    <property type="reaction ID" value="UER00002"/>
</dbReference>
<dbReference type="Proteomes" id="UP000002595">
    <property type="component" value="Chromosome"/>
</dbReference>
<dbReference type="GO" id="GO:0005829">
    <property type="term" value="C:cytosol"/>
    <property type="evidence" value="ECO:0007669"/>
    <property type="project" value="TreeGrafter"/>
</dbReference>
<dbReference type="GO" id="GO:0004068">
    <property type="term" value="F:aspartate 1-decarboxylase activity"/>
    <property type="evidence" value="ECO:0007669"/>
    <property type="project" value="UniProtKB-UniRule"/>
</dbReference>
<dbReference type="GO" id="GO:0006523">
    <property type="term" value="P:alanine biosynthetic process"/>
    <property type="evidence" value="ECO:0007669"/>
    <property type="project" value="InterPro"/>
</dbReference>
<dbReference type="GO" id="GO:0015940">
    <property type="term" value="P:pantothenate biosynthetic process"/>
    <property type="evidence" value="ECO:0007669"/>
    <property type="project" value="UniProtKB-UniRule"/>
</dbReference>
<dbReference type="Gene3D" id="2.40.40.20">
    <property type="match status" value="1"/>
</dbReference>
<dbReference type="HAMAP" id="MF_00446">
    <property type="entry name" value="PanD"/>
    <property type="match status" value="1"/>
</dbReference>
<dbReference type="InterPro" id="IPR009010">
    <property type="entry name" value="Asp_de-COase-like_dom_sf"/>
</dbReference>
<dbReference type="InterPro" id="IPR003190">
    <property type="entry name" value="Asp_decarbox"/>
</dbReference>
<dbReference type="PANTHER" id="PTHR21012">
    <property type="entry name" value="ASPARTATE 1-DECARBOXYLASE"/>
    <property type="match status" value="1"/>
</dbReference>
<dbReference type="PANTHER" id="PTHR21012:SF0">
    <property type="entry name" value="ASPARTATE 1-DECARBOXYLASE"/>
    <property type="match status" value="1"/>
</dbReference>
<dbReference type="Pfam" id="PF02261">
    <property type="entry name" value="Asp_decarbox"/>
    <property type="match status" value="1"/>
</dbReference>
<dbReference type="SUPFAM" id="SSF50692">
    <property type="entry name" value="ADC-like"/>
    <property type="match status" value="1"/>
</dbReference>
<organism>
    <name type="scientific">Pyrobaculum islandicum (strain DSM 4184 / JCM 9189 / GEO3)</name>
    <dbReference type="NCBI Taxonomy" id="384616"/>
    <lineage>
        <taxon>Archaea</taxon>
        <taxon>Thermoproteota</taxon>
        <taxon>Thermoprotei</taxon>
        <taxon>Thermoproteales</taxon>
        <taxon>Thermoproteaceae</taxon>
        <taxon>Pyrobaculum</taxon>
    </lineage>
</organism>
<proteinExistence type="inferred from homology"/>
<comment type="function">
    <text evidence="1">Catalyzes the pyruvoyl-dependent decarboxylation of aspartate to produce beta-alanine.</text>
</comment>
<comment type="catalytic activity">
    <reaction evidence="1">
        <text>L-aspartate + H(+) = beta-alanine + CO2</text>
        <dbReference type="Rhea" id="RHEA:19497"/>
        <dbReference type="ChEBI" id="CHEBI:15378"/>
        <dbReference type="ChEBI" id="CHEBI:16526"/>
        <dbReference type="ChEBI" id="CHEBI:29991"/>
        <dbReference type="ChEBI" id="CHEBI:57966"/>
        <dbReference type="EC" id="4.1.1.11"/>
    </reaction>
</comment>
<comment type="cofactor">
    <cofactor evidence="1">
        <name>pyruvate</name>
        <dbReference type="ChEBI" id="CHEBI:15361"/>
    </cofactor>
    <text evidence="1">Binds 1 pyruvoyl group covalently per subunit.</text>
</comment>
<comment type="pathway">
    <text evidence="1">Cofactor biosynthesis; (R)-pantothenate biosynthesis; beta-alanine from L-aspartate: step 1/1.</text>
</comment>
<comment type="subunit">
    <text evidence="1">Heterooctamer of four alpha and four beta subunits.</text>
</comment>
<comment type="subcellular location">
    <subcellularLocation>
        <location evidence="1">Cytoplasm</location>
    </subcellularLocation>
</comment>
<comment type="PTM">
    <text evidence="1">Is synthesized initially as an inactive proenzyme, which is activated by self-cleavage at a specific serine bond to produce a beta-subunit with a hydroxyl group at its C-terminus and an alpha-subunit with a pyruvoyl group at its N-terminus.</text>
</comment>
<comment type="similarity">
    <text evidence="1">Belongs to the PanD family.</text>
</comment>
<feature type="chain" id="PRO_0000307091" description="Aspartate 1-decarboxylase beta chain" evidence="1">
    <location>
        <begin position="1"/>
        <end position="23"/>
    </location>
</feature>
<feature type="chain" id="PRO_0000307092" description="Aspartate 1-decarboxylase alpha chain" evidence="1">
    <location>
        <begin position="24"/>
        <end position="120"/>
    </location>
</feature>
<feature type="active site" description="Schiff-base intermediate with substrate; via pyruvic acid" evidence="1">
    <location>
        <position position="24"/>
    </location>
</feature>
<feature type="active site" description="Proton donor" evidence="1">
    <location>
        <position position="57"/>
    </location>
</feature>
<feature type="binding site" evidence="1">
    <location>
        <position position="56"/>
    </location>
    <ligand>
        <name>substrate</name>
    </ligand>
</feature>
<feature type="binding site" evidence="1">
    <location>
        <begin position="70"/>
        <end position="72"/>
    </location>
    <ligand>
        <name>substrate</name>
    </ligand>
</feature>
<feature type="modified residue" description="Pyruvic acid (Ser)" evidence="1">
    <location>
        <position position="24"/>
    </location>
</feature>
<gene>
    <name evidence="1" type="primary">panD</name>
    <name type="ordered locus">Pisl_1381</name>
</gene>
<protein>
    <recommendedName>
        <fullName evidence="1">Aspartate 1-decarboxylase</fullName>
        <ecNumber evidence="1">4.1.1.11</ecNumber>
    </recommendedName>
    <alternativeName>
        <fullName evidence="1">Aspartate alpha-decarboxylase</fullName>
    </alternativeName>
    <component>
        <recommendedName>
            <fullName evidence="1">Aspartate 1-decarboxylase beta chain</fullName>
        </recommendedName>
    </component>
    <component>
        <recommendedName>
            <fullName evidence="1">Aspartate 1-decarboxylase alpha chain</fullName>
        </recommendedName>
    </component>
</protein>
<sequence length="120" mass="12885">MPVLLRAKAHGLVVTGKNLHYEGSLTLGRDIIEAAGFYPLEKVEVYNVTNGARFTTYVIPGRPGEVVLNGAAARLGEVGDVIIVAAYECVANPASHIATIAIFEGNKLKEVRKISLSDMY</sequence>